<protein>
    <recommendedName>
        <fullName>Long chronological lifespan protein 2</fullName>
    </recommendedName>
</protein>
<dbReference type="EMBL" id="BA000052">
    <property type="protein sequence ID" value="BAE61622.1"/>
    <property type="molecule type" value="Genomic_DNA"/>
</dbReference>
<dbReference type="RefSeq" id="XP_001822755.1">
    <property type="nucleotide sequence ID" value="XM_001822703.2"/>
</dbReference>
<dbReference type="SMR" id="Q2U9Z3"/>
<dbReference type="EnsemblFungi" id="BAE61622">
    <property type="protein sequence ID" value="BAE61622"/>
    <property type="gene ID" value="AO090102000607"/>
</dbReference>
<dbReference type="GeneID" id="5994800"/>
<dbReference type="KEGG" id="aor:AO090102000607"/>
<dbReference type="VEuPathDB" id="FungiDB:AO090102000607"/>
<dbReference type="HOGENOM" id="CLU_142363_0_0_1"/>
<dbReference type="OMA" id="DNYLCPD"/>
<dbReference type="OrthoDB" id="126304at5052"/>
<dbReference type="Proteomes" id="UP000006564">
    <property type="component" value="Chromosome 4"/>
</dbReference>
<dbReference type="GO" id="GO:0036503">
    <property type="term" value="P:ERAD pathway"/>
    <property type="evidence" value="ECO:0007669"/>
    <property type="project" value="TreeGrafter"/>
</dbReference>
<dbReference type="CDD" id="cd23996">
    <property type="entry name" value="LCL2-like"/>
    <property type="match status" value="1"/>
</dbReference>
<dbReference type="InterPro" id="IPR034543">
    <property type="entry name" value="LCL2"/>
</dbReference>
<dbReference type="PANTHER" id="PTHR38425">
    <property type="entry name" value="LONG CHRONOLOGICAL LIFESPAN PROTEIN 2"/>
    <property type="match status" value="1"/>
</dbReference>
<dbReference type="PANTHER" id="PTHR38425:SF1">
    <property type="entry name" value="LONG CHRONOLOGICAL LIFESPAN PROTEIN 2"/>
    <property type="match status" value="1"/>
</dbReference>
<sequence length="122" mass="13548">MLHTWIRTLGALLLLASVAHAQFQFFEHMFGGGRQEHQQQAAQNEPSDSSRYQNMWESAQCDKYLCPGTLACVHFPHHCPCAHPDNEDKIELSEGSAVCISKGGFQPGEAARKIELARKGVL</sequence>
<keyword id="KW-1185">Reference proteome</keyword>
<keyword id="KW-0732">Signal</keyword>
<accession>Q2U9Z3</accession>
<reference key="1">
    <citation type="journal article" date="2005" name="Nature">
        <title>Genome sequencing and analysis of Aspergillus oryzae.</title>
        <authorList>
            <person name="Machida M."/>
            <person name="Asai K."/>
            <person name="Sano M."/>
            <person name="Tanaka T."/>
            <person name="Kumagai T."/>
            <person name="Terai G."/>
            <person name="Kusumoto K."/>
            <person name="Arima T."/>
            <person name="Akita O."/>
            <person name="Kashiwagi Y."/>
            <person name="Abe K."/>
            <person name="Gomi K."/>
            <person name="Horiuchi H."/>
            <person name="Kitamoto K."/>
            <person name="Kobayashi T."/>
            <person name="Takeuchi M."/>
            <person name="Denning D.W."/>
            <person name="Galagan J.E."/>
            <person name="Nierman W.C."/>
            <person name="Yu J."/>
            <person name="Archer D.B."/>
            <person name="Bennett J.W."/>
            <person name="Bhatnagar D."/>
            <person name="Cleveland T.E."/>
            <person name="Fedorova N.D."/>
            <person name="Gotoh O."/>
            <person name="Horikawa H."/>
            <person name="Hosoyama A."/>
            <person name="Ichinomiya M."/>
            <person name="Igarashi R."/>
            <person name="Iwashita K."/>
            <person name="Juvvadi P.R."/>
            <person name="Kato M."/>
            <person name="Kato Y."/>
            <person name="Kin T."/>
            <person name="Kokubun A."/>
            <person name="Maeda H."/>
            <person name="Maeyama N."/>
            <person name="Maruyama J."/>
            <person name="Nagasaki H."/>
            <person name="Nakajima T."/>
            <person name="Oda K."/>
            <person name="Okada K."/>
            <person name="Paulsen I."/>
            <person name="Sakamoto K."/>
            <person name="Sawano T."/>
            <person name="Takahashi M."/>
            <person name="Takase K."/>
            <person name="Terabayashi Y."/>
            <person name="Wortman J.R."/>
            <person name="Yamada O."/>
            <person name="Yamagata Y."/>
            <person name="Anazawa H."/>
            <person name="Hata Y."/>
            <person name="Koide Y."/>
            <person name="Komori T."/>
            <person name="Koyama Y."/>
            <person name="Minetoki T."/>
            <person name="Suharnan S."/>
            <person name="Tanaka A."/>
            <person name="Isono K."/>
            <person name="Kuhara S."/>
            <person name="Ogasawara N."/>
            <person name="Kikuchi H."/>
        </authorList>
    </citation>
    <scope>NUCLEOTIDE SEQUENCE [LARGE SCALE GENOMIC DNA]</scope>
    <source>
        <strain>ATCC 42149 / RIB 40</strain>
    </source>
</reference>
<gene>
    <name type="primary">lcl2</name>
    <name type="ORF">AO090102000607</name>
</gene>
<name>LCL2_ASPOR</name>
<evidence type="ECO:0000250" key="1"/>
<evidence type="ECO:0000255" key="2"/>
<evidence type="ECO:0000305" key="3"/>
<organism>
    <name type="scientific">Aspergillus oryzae (strain ATCC 42149 / RIB 40)</name>
    <name type="common">Yellow koji mold</name>
    <dbReference type="NCBI Taxonomy" id="510516"/>
    <lineage>
        <taxon>Eukaryota</taxon>
        <taxon>Fungi</taxon>
        <taxon>Dikarya</taxon>
        <taxon>Ascomycota</taxon>
        <taxon>Pezizomycotina</taxon>
        <taxon>Eurotiomycetes</taxon>
        <taxon>Eurotiomycetidae</taxon>
        <taxon>Eurotiales</taxon>
        <taxon>Aspergillaceae</taxon>
        <taxon>Aspergillus</taxon>
        <taxon>Aspergillus subgen. Circumdati</taxon>
    </lineage>
</organism>
<feature type="signal peptide" evidence="2">
    <location>
        <begin position="1"/>
        <end position="21"/>
    </location>
</feature>
<feature type="chain" id="PRO_0000408595" description="Long chronological lifespan protein 2">
    <location>
        <begin position="22"/>
        <end position="122"/>
    </location>
</feature>
<proteinExistence type="inferred from homology"/>
<comment type="function">
    <text evidence="1">Probable component of the endoplasmic reticulum-associated degradation (ERAD) pathway.</text>
</comment>
<comment type="similarity">
    <text evidence="3">Belongs to the LCL2 family.</text>
</comment>